<evidence type="ECO:0000255" key="1">
    <source>
        <dbReference type="HAMAP-Rule" id="MF_01306"/>
    </source>
</evidence>
<evidence type="ECO:0000256" key="2">
    <source>
        <dbReference type="SAM" id="MobiDB-lite"/>
    </source>
</evidence>
<evidence type="ECO:0000305" key="3"/>
<reference key="1">
    <citation type="journal article" date="2006" name="J. Bacteriol.">
        <title>The genome sequence of Methanosphaera stadtmanae reveals why this human intestinal archaeon is restricted to methanol and H2 for methane formation and ATP synthesis.</title>
        <authorList>
            <person name="Fricke W.F."/>
            <person name="Seedorf H."/>
            <person name="Henne A."/>
            <person name="Kruer M."/>
            <person name="Liesegang H."/>
            <person name="Hedderich R."/>
            <person name="Gottschalk G."/>
            <person name="Thauer R.K."/>
        </authorList>
    </citation>
    <scope>NUCLEOTIDE SEQUENCE [LARGE SCALE GENOMIC DNA]</scope>
    <source>
        <strain>ATCC 43021 / DSM 3091 / JCM 11832 / MCB-3</strain>
    </source>
</reference>
<accession>Q2NFZ4</accession>
<feature type="chain" id="PRO_0000293408" description="Small ribosomal subunit protein uS4">
    <location>
        <begin position="1"/>
        <end position="182"/>
    </location>
</feature>
<feature type="domain" description="S4 RNA-binding" evidence="1">
    <location>
        <begin position="103"/>
        <end position="170"/>
    </location>
</feature>
<feature type="region of interest" description="Disordered" evidence="2">
    <location>
        <begin position="1"/>
        <end position="23"/>
    </location>
</feature>
<feature type="region of interest" description="Disordered" evidence="2">
    <location>
        <begin position="158"/>
        <end position="182"/>
    </location>
</feature>
<feature type="compositionally biased region" description="Acidic residues" evidence="2">
    <location>
        <begin position="167"/>
        <end position="182"/>
    </location>
</feature>
<sequence length="182" mass="21132">MGHPKKPRKQYDTPSHPWNADRIKEENRLANKYGLKNKKEIWKAESRVKRYRRDARIILGMDIDERADKEKELLDHLVRAGFISPNAKLEEVLDLNVEDILRRRLQSLVFKRGLSHTAKEARLFVVHGHITLNGKKINAPGHLVEKADEENIDFYPGSSVAKQFETQETEEVAAEEEPKDEE</sequence>
<protein>
    <recommendedName>
        <fullName evidence="1">Small ribosomal subunit protein uS4</fullName>
    </recommendedName>
    <alternativeName>
        <fullName evidence="3">30S ribosomal protein S4</fullName>
    </alternativeName>
</protein>
<gene>
    <name evidence="1" type="primary">rps4</name>
    <name type="ordered locus">Msp_0870</name>
</gene>
<organism>
    <name type="scientific">Methanosphaera stadtmanae (strain ATCC 43021 / DSM 3091 / JCM 11832 / MCB-3)</name>
    <dbReference type="NCBI Taxonomy" id="339860"/>
    <lineage>
        <taxon>Archaea</taxon>
        <taxon>Methanobacteriati</taxon>
        <taxon>Methanobacteriota</taxon>
        <taxon>Methanomada group</taxon>
        <taxon>Methanobacteria</taxon>
        <taxon>Methanobacteriales</taxon>
        <taxon>Methanobacteriaceae</taxon>
        <taxon>Methanosphaera</taxon>
    </lineage>
</organism>
<dbReference type="EMBL" id="CP000102">
    <property type="protein sequence ID" value="ABC57259.1"/>
    <property type="molecule type" value="Genomic_DNA"/>
</dbReference>
<dbReference type="RefSeq" id="WP_011406458.1">
    <property type="nucleotide sequence ID" value="NC_007681.1"/>
</dbReference>
<dbReference type="SMR" id="Q2NFZ4"/>
<dbReference type="STRING" id="339860.Msp_0870"/>
<dbReference type="KEGG" id="mst:Msp_0870"/>
<dbReference type="eggNOG" id="arCOG04239">
    <property type="taxonomic scope" value="Archaea"/>
</dbReference>
<dbReference type="HOGENOM" id="CLU_089738_1_1_2"/>
<dbReference type="OrthoDB" id="10429at2157"/>
<dbReference type="Proteomes" id="UP000001931">
    <property type="component" value="Chromosome"/>
</dbReference>
<dbReference type="GO" id="GO:0015935">
    <property type="term" value="C:small ribosomal subunit"/>
    <property type="evidence" value="ECO:0007669"/>
    <property type="project" value="InterPro"/>
</dbReference>
<dbReference type="GO" id="GO:0019843">
    <property type="term" value="F:rRNA binding"/>
    <property type="evidence" value="ECO:0007669"/>
    <property type="project" value="UniProtKB-UniRule"/>
</dbReference>
<dbReference type="GO" id="GO:0003735">
    <property type="term" value="F:structural constituent of ribosome"/>
    <property type="evidence" value="ECO:0007669"/>
    <property type="project" value="InterPro"/>
</dbReference>
<dbReference type="GO" id="GO:0042274">
    <property type="term" value="P:ribosomal small subunit biogenesis"/>
    <property type="evidence" value="ECO:0007669"/>
    <property type="project" value="TreeGrafter"/>
</dbReference>
<dbReference type="GO" id="GO:0006412">
    <property type="term" value="P:translation"/>
    <property type="evidence" value="ECO:0007669"/>
    <property type="project" value="UniProtKB-UniRule"/>
</dbReference>
<dbReference type="CDD" id="cd00165">
    <property type="entry name" value="S4"/>
    <property type="match status" value="1"/>
</dbReference>
<dbReference type="Gene3D" id="3.10.290.10">
    <property type="entry name" value="RNA-binding S4 domain"/>
    <property type="match status" value="1"/>
</dbReference>
<dbReference type="HAMAP" id="MF_01306_A">
    <property type="entry name" value="Ribosomal_uS4_A"/>
    <property type="match status" value="1"/>
</dbReference>
<dbReference type="InterPro" id="IPR022801">
    <property type="entry name" value="Ribosomal_uS4"/>
</dbReference>
<dbReference type="InterPro" id="IPR022802">
    <property type="entry name" value="Ribosomal_uS4_arc"/>
</dbReference>
<dbReference type="InterPro" id="IPR018079">
    <property type="entry name" value="Ribosomal_uS4_CS"/>
</dbReference>
<dbReference type="InterPro" id="IPR005710">
    <property type="entry name" value="Ribosomal_uS4_euk/arc"/>
</dbReference>
<dbReference type="InterPro" id="IPR001912">
    <property type="entry name" value="Ribosomal_uS4_N"/>
</dbReference>
<dbReference type="InterPro" id="IPR002942">
    <property type="entry name" value="S4_RNA-bd"/>
</dbReference>
<dbReference type="InterPro" id="IPR036986">
    <property type="entry name" value="S4_RNA-bd_sf"/>
</dbReference>
<dbReference type="NCBIfam" id="NF003139">
    <property type="entry name" value="PRK04051.1"/>
    <property type="match status" value="1"/>
</dbReference>
<dbReference type="NCBIfam" id="TIGR01018">
    <property type="entry name" value="uS4_arch"/>
    <property type="match status" value="1"/>
</dbReference>
<dbReference type="PANTHER" id="PTHR11831">
    <property type="entry name" value="30S 40S RIBOSOMAL PROTEIN"/>
    <property type="match status" value="1"/>
</dbReference>
<dbReference type="PANTHER" id="PTHR11831:SF5">
    <property type="entry name" value="40S RIBOSOMAL PROTEIN S9"/>
    <property type="match status" value="1"/>
</dbReference>
<dbReference type="Pfam" id="PF01479">
    <property type="entry name" value="S4"/>
    <property type="match status" value="1"/>
</dbReference>
<dbReference type="SMART" id="SM01390">
    <property type="entry name" value="Ribosomal_S4"/>
    <property type="match status" value="1"/>
</dbReference>
<dbReference type="SMART" id="SM00363">
    <property type="entry name" value="S4"/>
    <property type="match status" value="1"/>
</dbReference>
<dbReference type="SUPFAM" id="SSF55174">
    <property type="entry name" value="Alpha-L RNA-binding motif"/>
    <property type="match status" value="1"/>
</dbReference>
<dbReference type="PROSITE" id="PS00632">
    <property type="entry name" value="RIBOSOMAL_S4"/>
    <property type="match status" value="1"/>
</dbReference>
<dbReference type="PROSITE" id="PS50889">
    <property type="entry name" value="S4"/>
    <property type="match status" value="1"/>
</dbReference>
<name>RS4_METST</name>
<keyword id="KW-1185">Reference proteome</keyword>
<keyword id="KW-0687">Ribonucleoprotein</keyword>
<keyword id="KW-0689">Ribosomal protein</keyword>
<keyword id="KW-0694">RNA-binding</keyword>
<keyword id="KW-0699">rRNA-binding</keyword>
<comment type="function">
    <text evidence="1">One of the primary rRNA binding proteins, it binds directly to 16S rRNA where it nucleates assembly of the body of the 30S subunit.</text>
</comment>
<comment type="function">
    <text evidence="1">With S5 and S12 plays an important role in translational accuracy.</text>
</comment>
<comment type="subunit">
    <text evidence="1">Part of the 30S ribosomal subunit. Contacts protein S5. The interaction surface between S4 and S5 is involved in control of translational fidelity.</text>
</comment>
<comment type="similarity">
    <text evidence="1">Belongs to the universal ribosomal protein uS4 family.</text>
</comment>
<proteinExistence type="inferred from homology"/>